<name>PLSX_PSE14</name>
<keyword id="KW-0963">Cytoplasm</keyword>
<keyword id="KW-0444">Lipid biosynthesis</keyword>
<keyword id="KW-0443">Lipid metabolism</keyword>
<keyword id="KW-0594">Phospholipid biosynthesis</keyword>
<keyword id="KW-1208">Phospholipid metabolism</keyword>
<keyword id="KW-0808">Transferase</keyword>
<organism>
    <name type="scientific">Pseudomonas savastanoi pv. phaseolicola (strain 1448A / Race 6)</name>
    <name type="common">Pseudomonas syringae pv. phaseolicola (strain 1448A / Race 6)</name>
    <dbReference type="NCBI Taxonomy" id="264730"/>
    <lineage>
        <taxon>Bacteria</taxon>
        <taxon>Pseudomonadati</taxon>
        <taxon>Pseudomonadota</taxon>
        <taxon>Gammaproteobacteria</taxon>
        <taxon>Pseudomonadales</taxon>
        <taxon>Pseudomonadaceae</taxon>
        <taxon>Pseudomonas</taxon>
    </lineage>
</organism>
<protein>
    <recommendedName>
        <fullName evidence="1">Phosphate acyltransferase</fullName>
        <ecNumber evidence="1">2.3.1.274</ecNumber>
    </recommendedName>
    <alternativeName>
        <fullName evidence="1">Acyl-ACP phosphotransacylase</fullName>
    </alternativeName>
    <alternativeName>
        <fullName evidence="1">Acyl-[acyl-carrier-protein]--phosphate acyltransferase</fullName>
    </alternativeName>
    <alternativeName>
        <fullName evidence="1">Phosphate-acyl-ACP acyltransferase</fullName>
    </alternativeName>
</protein>
<proteinExistence type="inferred from homology"/>
<accession>Q48L43</accession>
<sequence>MSAPIIAIDAMGGDFGPRNIVQASLACLTATPSLHLVLVGQASLIEELIARHGAVDRSRLRVVNANEAIAMDERPSQALRGKPDSSMRVALELVASGQAQACVSAGNTGALMALSRFVLKTLPGIDRPAMIAAIPTRSGHCQMLDLGANVDCSAEALYQFAVMGSVLAETLGVKKPRVALLNVGTEDIKGNQQVKLAAGLLQAAQGLNYIGYIEGDGLYRGEADVVVCDGFVGNVLLKSSEGLASMIAARIDTLFNRNLLSRAVGALALPLLKRLQTDLAPARHNGASLLGLQGIVVKSHGSASVSGFQSAIQRAIVESRENLPQRLKGRLELLLQNGQT</sequence>
<comment type="function">
    <text evidence="1">Catalyzes the reversible formation of acyl-phosphate (acyl-PO(4)) from acyl-[acyl-carrier-protein] (acyl-ACP). This enzyme utilizes acyl-ACP as fatty acyl donor, but not acyl-CoA.</text>
</comment>
<comment type="catalytic activity">
    <reaction evidence="1">
        <text>a fatty acyl-[ACP] + phosphate = an acyl phosphate + holo-[ACP]</text>
        <dbReference type="Rhea" id="RHEA:42292"/>
        <dbReference type="Rhea" id="RHEA-COMP:9685"/>
        <dbReference type="Rhea" id="RHEA-COMP:14125"/>
        <dbReference type="ChEBI" id="CHEBI:43474"/>
        <dbReference type="ChEBI" id="CHEBI:59918"/>
        <dbReference type="ChEBI" id="CHEBI:64479"/>
        <dbReference type="ChEBI" id="CHEBI:138651"/>
        <dbReference type="EC" id="2.3.1.274"/>
    </reaction>
</comment>
<comment type="pathway">
    <text evidence="1">Lipid metabolism; phospholipid metabolism.</text>
</comment>
<comment type="subunit">
    <text evidence="1">Homodimer. Probably interacts with PlsY.</text>
</comment>
<comment type="subcellular location">
    <subcellularLocation>
        <location evidence="1">Cytoplasm</location>
    </subcellularLocation>
    <text evidence="1">Associated with the membrane possibly through PlsY.</text>
</comment>
<comment type="similarity">
    <text evidence="1">Belongs to the PlsX family.</text>
</comment>
<evidence type="ECO:0000255" key="1">
    <source>
        <dbReference type="HAMAP-Rule" id="MF_00019"/>
    </source>
</evidence>
<reference key="1">
    <citation type="journal article" date="2005" name="J. Bacteriol.">
        <title>Whole-genome sequence analysis of Pseudomonas syringae pv. phaseolicola 1448A reveals divergence among pathovars in genes involved in virulence and transposition.</title>
        <authorList>
            <person name="Joardar V."/>
            <person name="Lindeberg M."/>
            <person name="Jackson R.W."/>
            <person name="Selengut J."/>
            <person name="Dodson R."/>
            <person name="Brinkac L.M."/>
            <person name="Daugherty S.C."/>
            <person name="DeBoy R.T."/>
            <person name="Durkin A.S."/>
            <person name="Gwinn Giglio M."/>
            <person name="Madupu R."/>
            <person name="Nelson W.C."/>
            <person name="Rosovitz M.J."/>
            <person name="Sullivan S.A."/>
            <person name="Crabtree J."/>
            <person name="Creasy T."/>
            <person name="Davidsen T.M."/>
            <person name="Haft D.H."/>
            <person name="Zafar N."/>
            <person name="Zhou L."/>
            <person name="Halpin R."/>
            <person name="Holley T."/>
            <person name="Khouri H.M."/>
            <person name="Feldblyum T.V."/>
            <person name="White O."/>
            <person name="Fraser C.M."/>
            <person name="Chatterjee A.K."/>
            <person name="Cartinhour S."/>
            <person name="Schneider D."/>
            <person name="Mansfield J.W."/>
            <person name="Collmer A."/>
            <person name="Buell R."/>
        </authorList>
    </citation>
    <scope>NUCLEOTIDE SEQUENCE [LARGE SCALE GENOMIC DNA]</scope>
    <source>
        <strain>1448A / Race 6</strain>
    </source>
</reference>
<gene>
    <name evidence="1" type="primary">plsX</name>
    <name type="ordered locus">PSPPH_1639</name>
</gene>
<feature type="chain" id="PRO_1000001801" description="Phosphate acyltransferase">
    <location>
        <begin position="1"/>
        <end position="340"/>
    </location>
</feature>
<dbReference type="EC" id="2.3.1.274" evidence="1"/>
<dbReference type="EMBL" id="CP000058">
    <property type="protein sequence ID" value="AAZ35493.1"/>
    <property type="molecule type" value="Genomic_DNA"/>
</dbReference>
<dbReference type="RefSeq" id="WP_011168137.1">
    <property type="nucleotide sequence ID" value="NC_005773.3"/>
</dbReference>
<dbReference type="SMR" id="Q48L43"/>
<dbReference type="KEGG" id="psp:PSPPH_1639"/>
<dbReference type="eggNOG" id="COG0416">
    <property type="taxonomic scope" value="Bacteria"/>
</dbReference>
<dbReference type="HOGENOM" id="CLU_039379_1_0_6"/>
<dbReference type="UniPathway" id="UPA00085"/>
<dbReference type="Proteomes" id="UP000000551">
    <property type="component" value="Chromosome"/>
</dbReference>
<dbReference type="GO" id="GO:0005737">
    <property type="term" value="C:cytoplasm"/>
    <property type="evidence" value="ECO:0007669"/>
    <property type="project" value="UniProtKB-SubCell"/>
</dbReference>
<dbReference type="GO" id="GO:0043811">
    <property type="term" value="F:phosphate:acyl-[acyl carrier protein] acyltransferase activity"/>
    <property type="evidence" value="ECO:0007669"/>
    <property type="project" value="UniProtKB-UniRule"/>
</dbReference>
<dbReference type="GO" id="GO:0006633">
    <property type="term" value="P:fatty acid biosynthetic process"/>
    <property type="evidence" value="ECO:0007669"/>
    <property type="project" value="UniProtKB-UniRule"/>
</dbReference>
<dbReference type="GO" id="GO:0008654">
    <property type="term" value="P:phospholipid biosynthetic process"/>
    <property type="evidence" value="ECO:0007669"/>
    <property type="project" value="UniProtKB-KW"/>
</dbReference>
<dbReference type="Gene3D" id="3.40.718.10">
    <property type="entry name" value="Isopropylmalate Dehydrogenase"/>
    <property type="match status" value="1"/>
</dbReference>
<dbReference type="HAMAP" id="MF_00019">
    <property type="entry name" value="PlsX"/>
    <property type="match status" value="1"/>
</dbReference>
<dbReference type="InterPro" id="IPR003664">
    <property type="entry name" value="FA_synthesis"/>
</dbReference>
<dbReference type="InterPro" id="IPR012281">
    <property type="entry name" value="Phospholipid_synth_PlsX-like"/>
</dbReference>
<dbReference type="NCBIfam" id="TIGR00182">
    <property type="entry name" value="plsX"/>
    <property type="match status" value="1"/>
</dbReference>
<dbReference type="PANTHER" id="PTHR30100">
    <property type="entry name" value="FATTY ACID/PHOSPHOLIPID SYNTHESIS PROTEIN PLSX"/>
    <property type="match status" value="1"/>
</dbReference>
<dbReference type="PANTHER" id="PTHR30100:SF1">
    <property type="entry name" value="PHOSPHATE ACYLTRANSFERASE"/>
    <property type="match status" value="1"/>
</dbReference>
<dbReference type="Pfam" id="PF02504">
    <property type="entry name" value="FA_synthesis"/>
    <property type="match status" value="1"/>
</dbReference>
<dbReference type="PIRSF" id="PIRSF002465">
    <property type="entry name" value="Phsphlp_syn_PlsX"/>
    <property type="match status" value="1"/>
</dbReference>
<dbReference type="SUPFAM" id="SSF53659">
    <property type="entry name" value="Isocitrate/Isopropylmalate dehydrogenase-like"/>
    <property type="match status" value="1"/>
</dbReference>